<comment type="function">
    <text evidence="2">Translocates 4-amino-4-deoxy-L-arabinose-phosphoundecaprenol (alpha-L-Ara4N-phosphoundecaprenol) from the cytoplasmic to the periplasmic side of the inner membrane.</text>
</comment>
<comment type="pathway">
    <text evidence="2">Bacterial outer membrane biogenesis; lipopolysaccharide biosynthesis.</text>
</comment>
<comment type="subunit">
    <text evidence="2">Heterodimer of ArnE and ArnF.</text>
</comment>
<comment type="subcellular location">
    <subcellularLocation>
        <location evidence="2">Cell inner membrane</location>
        <topology evidence="2">Multi-pass membrane protein</topology>
    </subcellularLocation>
</comment>
<comment type="similarity">
    <text evidence="2">Belongs to the ArnE family.</text>
</comment>
<protein>
    <recommendedName>
        <fullName evidence="2">Probable 4-amino-4-deoxy-L-arabinose-phosphoundecaprenol flippase subunit ArnE</fullName>
        <shortName evidence="2">L-Ara4N-phosphoundecaprenol flippase subunit ArnE</shortName>
    </recommendedName>
    <alternativeName>
        <fullName evidence="2">Undecaprenyl phosphate-aminoarabinose flippase subunit ArnE</fullName>
    </alternativeName>
</protein>
<accession>A7ZP76</accession>
<organism>
    <name type="scientific">Escherichia coli O139:H28 (strain E24377A / ETEC)</name>
    <dbReference type="NCBI Taxonomy" id="331111"/>
    <lineage>
        <taxon>Bacteria</taxon>
        <taxon>Pseudomonadati</taxon>
        <taxon>Pseudomonadota</taxon>
        <taxon>Gammaproteobacteria</taxon>
        <taxon>Enterobacterales</taxon>
        <taxon>Enterobacteriaceae</taxon>
        <taxon>Escherichia</taxon>
    </lineage>
</organism>
<name>ARNE_ECO24</name>
<keyword id="KW-0997">Cell inner membrane</keyword>
<keyword id="KW-1003">Cell membrane</keyword>
<keyword id="KW-0441">Lipid A biosynthesis</keyword>
<keyword id="KW-0444">Lipid biosynthesis</keyword>
<keyword id="KW-0443">Lipid metabolism</keyword>
<keyword id="KW-0448">Lipopolysaccharide biosynthesis</keyword>
<keyword id="KW-0472">Membrane</keyword>
<keyword id="KW-1185">Reference proteome</keyword>
<keyword id="KW-0812">Transmembrane</keyword>
<keyword id="KW-1133">Transmembrane helix</keyword>
<keyword id="KW-0813">Transport</keyword>
<sequence>MIWLTLVFASLLSVAGQLCQKQATCFVAINKRRKHIVLWLGLALACLGLAMVLWLLVLQNVPVGIAYPMLSLNFVWVTLAAVKLWHEPVSPRHWCGVAFIIGGIVILGSTV</sequence>
<proteinExistence type="inferred from homology"/>
<reference key="1">
    <citation type="journal article" date="2008" name="J. Bacteriol.">
        <title>The pangenome structure of Escherichia coli: comparative genomic analysis of E. coli commensal and pathogenic isolates.</title>
        <authorList>
            <person name="Rasko D.A."/>
            <person name="Rosovitz M.J."/>
            <person name="Myers G.S.A."/>
            <person name="Mongodin E.F."/>
            <person name="Fricke W.F."/>
            <person name="Gajer P."/>
            <person name="Crabtree J."/>
            <person name="Sebaihia M."/>
            <person name="Thomson N.R."/>
            <person name="Chaudhuri R."/>
            <person name="Henderson I.R."/>
            <person name="Sperandio V."/>
            <person name="Ravel J."/>
        </authorList>
    </citation>
    <scope>NUCLEOTIDE SEQUENCE [LARGE SCALE GENOMIC DNA]</scope>
    <source>
        <strain>E24377A / ETEC</strain>
    </source>
</reference>
<evidence type="ECO:0000255" key="1"/>
<evidence type="ECO:0000255" key="2">
    <source>
        <dbReference type="HAMAP-Rule" id="MF_01869"/>
    </source>
</evidence>
<feature type="chain" id="PRO_0000382963" description="Probable 4-amino-4-deoxy-L-arabinose-phosphoundecaprenol flippase subunit ArnE">
    <location>
        <begin position="1"/>
        <end position="111"/>
    </location>
</feature>
<feature type="topological domain" description="Cytoplasmic" evidence="1">
    <location>
        <begin position="1"/>
        <end position="35"/>
    </location>
</feature>
<feature type="transmembrane region" description="Helical" evidence="2">
    <location>
        <begin position="36"/>
        <end position="56"/>
    </location>
</feature>
<feature type="topological domain" description="Periplasmic" evidence="1">
    <location>
        <begin position="57"/>
        <end position="60"/>
    </location>
</feature>
<feature type="transmembrane region" description="Helical" evidence="2">
    <location>
        <begin position="61"/>
        <end position="81"/>
    </location>
</feature>
<feature type="topological domain" description="Cytoplasmic" evidence="1">
    <location>
        <begin position="82"/>
        <end position="87"/>
    </location>
</feature>
<feature type="transmembrane region" description="Helical" evidence="2">
    <location>
        <begin position="88"/>
        <end position="108"/>
    </location>
</feature>
<feature type="topological domain" description="Periplasmic" evidence="1">
    <location>
        <begin position="109"/>
        <end position="111"/>
    </location>
</feature>
<feature type="domain" description="EamA" evidence="2">
    <location>
        <begin position="40"/>
        <end position="109"/>
    </location>
</feature>
<dbReference type="EMBL" id="CP000800">
    <property type="protein sequence ID" value="ABV16768.1"/>
    <property type="molecule type" value="Genomic_DNA"/>
</dbReference>
<dbReference type="RefSeq" id="WP_000638031.1">
    <property type="nucleotide sequence ID" value="NC_009801.1"/>
</dbReference>
<dbReference type="SMR" id="A7ZP76"/>
<dbReference type="GeneID" id="93774916"/>
<dbReference type="KEGG" id="ecw:EcE24377A_2553"/>
<dbReference type="HOGENOM" id="CLU_131462_5_1_6"/>
<dbReference type="UniPathway" id="UPA00030"/>
<dbReference type="Proteomes" id="UP000001122">
    <property type="component" value="Chromosome"/>
</dbReference>
<dbReference type="GO" id="GO:0005886">
    <property type="term" value="C:plasma membrane"/>
    <property type="evidence" value="ECO:0007669"/>
    <property type="project" value="UniProtKB-SubCell"/>
</dbReference>
<dbReference type="GO" id="GO:1901505">
    <property type="term" value="F:carbohydrate derivative transmembrane transporter activity"/>
    <property type="evidence" value="ECO:0007669"/>
    <property type="project" value="InterPro"/>
</dbReference>
<dbReference type="GO" id="GO:0009245">
    <property type="term" value="P:lipid A biosynthetic process"/>
    <property type="evidence" value="ECO:0007669"/>
    <property type="project" value="UniProtKB-UniRule"/>
</dbReference>
<dbReference type="GO" id="GO:0009103">
    <property type="term" value="P:lipopolysaccharide biosynthetic process"/>
    <property type="evidence" value="ECO:0007669"/>
    <property type="project" value="UniProtKB-UniRule"/>
</dbReference>
<dbReference type="FunFam" id="1.10.3730.20:FF:000002">
    <property type="entry name" value="Probable 4-amino-4-deoxy-L-arabinose-phosphoundecaprenol flippase subunit ArnE"/>
    <property type="match status" value="1"/>
</dbReference>
<dbReference type="Gene3D" id="1.10.3730.20">
    <property type="match status" value="1"/>
</dbReference>
<dbReference type="HAMAP" id="MF_01869">
    <property type="entry name" value="Flippase_ArnE"/>
    <property type="match status" value="1"/>
</dbReference>
<dbReference type="InterPro" id="IPR000620">
    <property type="entry name" value="EamA_dom"/>
</dbReference>
<dbReference type="InterPro" id="IPR022883">
    <property type="entry name" value="Flippase_ArnE"/>
</dbReference>
<dbReference type="InterPro" id="IPR000390">
    <property type="entry name" value="Small_drug/metabolite_transptr"/>
</dbReference>
<dbReference type="NCBIfam" id="NF011625">
    <property type="entry name" value="PRK15051.1"/>
    <property type="match status" value="1"/>
</dbReference>
<dbReference type="PANTHER" id="PTHR30561:SF23">
    <property type="entry name" value="4-AMINO-4-DEOXY-L-ARABINOSE-PHOSPHOUNDECAPRENOL FLIPPASE SUBUNIT ARNE-RELATED"/>
    <property type="match status" value="1"/>
</dbReference>
<dbReference type="PANTHER" id="PTHR30561">
    <property type="entry name" value="SMR FAMILY PROTON-DEPENDENT DRUG EFFLUX TRANSPORTER SUGE"/>
    <property type="match status" value="1"/>
</dbReference>
<dbReference type="Pfam" id="PF00892">
    <property type="entry name" value="EamA"/>
    <property type="match status" value="1"/>
</dbReference>
<dbReference type="SUPFAM" id="SSF103481">
    <property type="entry name" value="Multidrug resistance efflux transporter EmrE"/>
    <property type="match status" value="1"/>
</dbReference>
<gene>
    <name evidence="2" type="primary">arnE</name>
    <name type="ordered locus">EcE24377A_2553</name>
</gene>